<comment type="function">
    <text evidence="1">This protein binds specifically to 23S rRNA; its binding is stimulated by other ribosomal proteins, e.g. L4, L17, and L20. It is important during the early stages of 50S assembly. It makes multiple contacts with different domains of the 23S rRNA in the assembled 50S subunit and ribosome (By similarity).</text>
</comment>
<comment type="function">
    <text evidence="1">The globular domain of the protein is located near the polypeptide exit tunnel on the outside of the subunit, while an extended beta-hairpin is found that lines the wall of the exit tunnel in the center of the 70S ribosome.</text>
</comment>
<comment type="subunit">
    <text evidence="1">Part of the 50S ribosomal subunit.</text>
</comment>
<comment type="similarity">
    <text evidence="1">Belongs to the universal ribosomal protein uL22 family.</text>
</comment>
<proteinExistence type="inferred from homology"/>
<reference key="1">
    <citation type="journal article" date="2006" name="Proc. Natl. Acad. Sci. U.S.A.">
        <title>Molecular genetic anatomy of inter- and intraserotype variation in the human bacterial pathogen group A Streptococcus.</title>
        <authorList>
            <person name="Beres S.B."/>
            <person name="Richter E.W."/>
            <person name="Nagiec M.J."/>
            <person name="Sumby P."/>
            <person name="Porcella S.F."/>
            <person name="DeLeo F.R."/>
            <person name="Musser J.M."/>
        </authorList>
    </citation>
    <scope>NUCLEOTIDE SEQUENCE [LARGE SCALE GENOMIC DNA]</scope>
    <source>
        <strain>MGAS2096</strain>
    </source>
</reference>
<name>RL22_STRPB</name>
<organism>
    <name type="scientific">Streptococcus pyogenes serotype M12 (strain MGAS2096)</name>
    <dbReference type="NCBI Taxonomy" id="370553"/>
    <lineage>
        <taxon>Bacteria</taxon>
        <taxon>Bacillati</taxon>
        <taxon>Bacillota</taxon>
        <taxon>Bacilli</taxon>
        <taxon>Lactobacillales</taxon>
        <taxon>Streptococcaceae</taxon>
        <taxon>Streptococcus</taxon>
    </lineage>
</organism>
<gene>
    <name evidence="1" type="primary">rplV</name>
    <name type="ordered locus">MGAS2096_Spy0053</name>
</gene>
<protein>
    <recommendedName>
        <fullName evidence="1">Large ribosomal subunit protein uL22</fullName>
    </recommendedName>
    <alternativeName>
        <fullName evidence="2">50S ribosomal protein L22</fullName>
    </alternativeName>
</protein>
<feature type="chain" id="PRO_1000052661" description="Large ribosomal subunit protein uL22">
    <location>
        <begin position="1"/>
        <end position="114"/>
    </location>
</feature>
<evidence type="ECO:0000255" key="1">
    <source>
        <dbReference type="HAMAP-Rule" id="MF_01331"/>
    </source>
</evidence>
<evidence type="ECO:0000305" key="2"/>
<keyword id="KW-0687">Ribonucleoprotein</keyword>
<keyword id="KW-0689">Ribosomal protein</keyword>
<keyword id="KW-0694">RNA-binding</keyword>
<keyword id="KW-0699">rRNA-binding</keyword>
<sequence>MAEITSAKAMARTVRVSPRKTRLVLDLIRGKKVADAIAILKFTPNKAARVIEKTLNSAIANAENNFGLEKANLVVSETFANEGPTMKRFRPRAKGSASPINKRTTHVTVVVSEK</sequence>
<dbReference type="EMBL" id="CP000261">
    <property type="protein sequence ID" value="ABF35105.1"/>
    <property type="molecule type" value="Genomic_DNA"/>
</dbReference>
<dbReference type="SMR" id="Q1JE53"/>
<dbReference type="KEGG" id="spj:MGAS2096_Spy0053"/>
<dbReference type="HOGENOM" id="CLU_083987_3_3_9"/>
<dbReference type="GO" id="GO:0022625">
    <property type="term" value="C:cytosolic large ribosomal subunit"/>
    <property type="evidence" value="ECO:0007669"/>
    <property type="project" value="TreeGrafter"/>
</dbReference>
<dbReference type="GO" id="GO:0019843">
    <property type="term" value="F:rRNA binding"/>
    <property type="evidence" value="ECO:0007669"/>
    <property type="project" value="UniProtKB-UniRule"/>
</dbReference>
<dbReference type="GO" id="GO:0003735">
    <property type="term" value="F:structural constituent of ribosome"/>
    <property type="evidence" value="ECO:0007669"/>
    <property type="project" value="InterPro"/>
</dbReference>
<dbReference type="GO" id="GO:0006412">
    <property type="term" value="P:translation"/>
    <property type="evidence" value="ECO:0007669"/>
    <property type="project" value="UniProtKB-UniRule"/>
</dbReference>
<dbReference type="CDD" id="cd00336">
    <property type="entry name" value="Ribosomal_L22"/>
    <property type="match status" value="1"/>
</dbReference>
<dbReference type="FunFam" id="3.90.470.10:FF:000001">
    <property type="entry name" value="50S ribosomal protein L22"/>
    <property type="match status" value="1"/>
</dbReference>
<dbReference type="Gene3D" id="3.90.470.10">
    <property type="entry name" value="Ribosomal protein L22/L17"/>
    <property type="match status" value="1"/>
</dbReference>
<dbReference type="HAMAP" id="MF_01331_B">
    <property type="entry name" value="Ribosomal_uL22_B"/>
    <property type="match status" value="1"/>
</dbReference>
<dbReference type="InterPro" id="IPR001063">
    <property type="entry name" value="Ribosomal_uL22"/>
</dbReference>
<dbReference type="InterPro" id="IPR005727">
    <property type="entry name" value="Ribosomal_uL22_bac/chlpt-type"/>
</dbReference>
<dbReference type="InterPro" id="IPR047867">
    <property type="entry name" value="Ribosomal_uL22_bac/org-type"/>
</dbReference>
<dbReference type="InterPro" id="IPR018260">
    <property type="entry name" value="Ribosomal_uL22_CS"/>
</dbReference>
<dbReference type="InterPro" id="IPR036394">
    <property type="entry name" value="Ribosomal_uL22_sf"/>
</dbReference>
<dbReference type="NCBIfam" id="TIGR01044">
    <property type="entry name" value="rplV_bact"/>
    <property type="match status" value="1"/>
</dbReference>
<dbReference type="PANTHER" id="PTHR13501">
    <property type="entry name" value="CHLOROPLAST 50S RIBOSOMAL PROTEIN L22-RELATED"/>
    <property type="match status" value="1"/>
</dbReference>
<dbReference type="PANTHER" id="PTHR13501:SF8">
    <property type="entry name" value="LARGE RIBOSOMAL SUBUNIT PROTEIN UL22M"/>
    <property type="match status" value="1"/>
</dbReference>
<dbReference type="Pfam" id="PF00237">
    <property type="entry name" value="Ribosomal_L22"/>
    <property type="match status" value="1"/>
</dbReference>
<dbReference type="SUPFAM" id="SSF54843">
    <property type="entry name" value="Ribosomal protein L22"/>
    <property type="match status" value="1"/>
</dbReference>
<dbReference type="PROSITE" id="PS00464">
    <property type="entry name" value="RIBOSOMAL_L22"/>
    <property type="match status" value="1"/>
</dbReference>
<accession>Q1JE53</accession>